<keyword id="KW-0067">ATP-binding</keyword>
<keyword id="KW-0963">Cytoplasm</keyword>
<keyword id="KW-0418">Kinase</keyword>
<keyword id="KW-0520">NAD</keyword>
<keyword id="KW-0521">NADP</keyword>
<keyword id="KW-0547">Nucleotide-binding</keyword>
<keyword id="KW-1185">Reference proteome</keyword>
<keyword id="KW-0808">Transferase</keyword>
<organism>
    <name type="scientific">Pseudomonas syringae pv. tomato (strain ATCC BAA-871 / DC3000)</name>
    <dbReference type="NCBI Taxonomy" id="223283"/>
    <lineage>
        <taxon>Bacteria</taxon>
        <taxon>Pseudomonadati</taxon>
        <taxon>Pseudomonadota</taxon>
        <taxon>Gammaproteobacteria</taxon>
        <taxon>Pseudomonadales</taxon>
        <taxon>Pseudomonadaceae</taxon>
        <taxon>Pseudomonas</taxon>
    </lineage>
</organism>
<protein>
    <recommendedName>
        <fullName evidence="1">NAD kinase</fullName>
        <ecNumber evidence="1">2.7.1.23</ecNumber>
    </recommendedName>
    <alternativeName>
        <fullName evidence="1">ATP-dependent NAD kinase</fullName>
    </alternativeName>
</protein>
<comment type="function">
    <text evidence="1">Involved in the regulation of the intracellular balance of NAD and NADP, and is a key enzyme in the biosynthesis of NADP. Catalyzes specifically the phosphorylation on 2'-hydroxyl of the adenosine moiety of NAD to yield NADP.</text>
</comment>
<comment type="catalytic activity">
    <reaction evidence="1">
        <text>NAD(+) + ATP = ADP + NADP(+) + H(+)</text>
        <dbReference type="Rhea" id="RHEA:18629"/>
        <dbReference type="ChEBI" id="CHEBI:15378"/>
        <dbReference type="ChEBI" id="CHEBI:30616"/>
        <dbReference type="ChEBI" id="CHEBI:57540"/>
        <dbReference type="ChEBI" id="CHEBI:58349"/>
        <dbReference type="ChEBI" id="CHEBI:456216"/>
        <dbReference type="EC" id="2.7.1.23"/>
    </reaction>
</comment>
<comment type="cofactor">
    <cofactor evidence="1">
        <name>a divalent metal cation</name>
        <dbReference type="ChEBI" id="CHEBI:60240"/>
    </cofactor>
</comment>
<comment type="subcellular location">
    <subcellularLocation>
        <location evidence="1">Cytoplasm</location>
    </subcellularLocation>
</comment>
<comment type="similarity">
    <text evidence="1">Belongs to the NAD kinase family.</text>
</comment>
<dbReference type="EC" id="2.7.1.23" evidence="1"/>
<dbReference type="EMBL" id="AE016853">
    <property type="protein sequence ID" value="AAO57262.1"/>
    <property type="molecule type" value="Genomic_DNA"/>
</dbReference>
<dbReference type="RefSeq" id="NP_793567.1">
    <property type="nucleotide sequence ID" value="NC_004578.1"/>
</dbReference>
<dbReference type="RefSeq" id="WP_003382947.1">
    <property type="nucleotide sequence ID" value="NC_004578.1"/>
</dbReference>
<dbReference type="SMR" id="Q87YK2"/>
<dbReference type="STRING" id="223283.PSPTO_3793"/>
<dbReference type="KEGG" id="pst:PSPTO_3793"/>
<dbReference type="PATRIC" id="fig|223283.9.peg.3888"/>
<dbReference type="eggNOG" id="COG0061">
    <property type="taxonomic scope" value="Bacteria"/>
</dbReference>
<dbReference type="HOGENOM" id="CLU_008831_0_1_6"/>
<dbReference type="OrthoDB" id="9774737at2"/>
<dbReference type="PhylomeDB" id="Q87YK2"/>
<dbReference type="Proteomes" id="UP000002515">
    <property type="component" value="Chromosome"/>
</dbReference>
<dbReference type="GO" id="GO:0005737">
    <property type="term" value="C:cytoplasm"/>
    <property type="evidence" value="ECO:0007669"/>
    <property type="project" value="UniProtKB-SubCell"/>
</dbReference>
<dbReference type="GO" id="GO:0005524">
    <property type="term" value="F:ATP binding"/>
    <property type="evidence" value="ECO:0007669"/>
    <property type="project" value="UniProtKB-KW"/>
</dbReference>
<dbReference type="GO" id="GO:0046872">
    <property type="term" value="F:metal ion binding"/>
    <property type="evidence" value="ECO:0007669"/>
    <property type="project" value="UniProtKB-UniRule"/>
</dbReference>
<dbReference type="GO" id="GO:0051287">
    <property type="term" value="F:NAD binding"/>
    <property type="evidence" value="ECO:0007669"/>
    <property type="project" value="UniProtKB-ARBA"/>
</dbReference>
<dbReference type="GO" id="GO:0003951">
    <property type="term" value="F:NAD+ kinase activity"/>
    <property type="evidence" value="ECO:0007669"/>
    <property type="project" value="UniProtKB-UniRule"/>
</dbReference>
<dbReference type="GO" id="GO:0019674">
    <property type="term" value="P:NAD metabolic process"/>
    <property type="evidence" value="ECO:0007669"/>
    <property type="project" value="InterPro"/>
</dbReference>
<dbReference type="GO" id="GO:0006741">
    <property type="term" value="P:NADP biosynthetic process"/>
    <property type="evidence" value="ECO:0007669"/>
    <property type="project" value="UniProtKB-UniRule"/>
</dbReference>
<dbReference type="FunFam" id="2.60.200.30:FF:000001">
    <property type="entry name" value="NAD kinase"/>
    <property type="match status" value="1"/>
</dbReference>
<dbReference type="Gene3D" id="3.40.50.10330">
    <property type="entry name" value="Probable inorganic polyphosphate/atp-NAD kinase, domain 1"/>
    <property type="match status" value="1"/>
</dbReference>
<dbReference type="Gene3D" id="2.60.200.30">
    <property type="entry name" value="Probable inorganic polyphosphate/atp-NAD kinase, domain 2"/>
    <property type="match status" value="1"/>
</dbReference>
<dbReference type="HAMAP" id="MF_00361">
    <property type="entry name" value="NAD_kinase"/>
    <property type="match status" value="1"/>
</dbReference>
<dbReference type="InterPro" id="IPR017438">
    <property type="entry name" value="ATP-NAD_kinase_N"/>
</dbReference>
<dbReference type="InterPro" id="IPR017437">
    <property type="entry name" value="ATP-NAD_kinase_PpnK-typ_C"/>
</dbReference>
<dbReference type="InterPro" id="IPR016064">
    <property type="entry name" value="NAD/diacylglycerol_kinase_sf"/>
</dbReference>
<dbReference type="InterPro" id="IPR002504">
    <property type="entry name" value="NADK"/>
</dbReference>
<dbReference type="NCBIfam" id="NF002306">
    <property type="entry name" value="PRK01231.1"/>
    <property type="match status" value="1"/>
</dbReference>
<dbReference type="PANTHER" id="PTHR20275">
    <property type="entry name" value="NAD KINASE"/>
    <property type="match status" value="1"/>
</dbReference>
<dbReference type="PANTHER" id="PTHR20275:SF0">
    <property type="entry name" value="NAD KINASE"/>
    <property type="match status" value="1"/>
</dbReference>
<dbReference type="Pfam" id="PF01513">
    <property type="entry name" value="NAD_kinase"/>
    <property type="match status" value="1"/>
</dbReference>
<dbReference type="Pfam" id="PF20143">
    <property type="entry name" value="NAD_kinase_C"/>
    <property type="match status" value="1"/>
</dbReference>
<dbReference type="SUPFAM" id="SSF111331">
    <property type="entry name" value="NAD kinase/diacylglycerol kinase-like"/>
    <property type="match status" value="1"/>
</dbReference>
<reference key="1">
    <citation type="journal article" date="2003" name="Proc. Natl. Acad. Sci. U.S.A.">
        <title>The complete genome sequence of the Arabidopsis and tomato pathogen Pseudomonas syringae pv. tomato DC3000.</title>
        <authorList>
            <person name="Buell C.R."/>
            <person name="Joardar V."/>
            <person name="Lindeberg M."/>
            <person name="Selengut J."/>
            <person name="Paulsen I.T."/>
            <person name="Gwinn M.L."/>
            <person name="Dodson R.J."/>
            <person name="DeBoy R.T."/>
            <person name="Durkin A.S."/>
            <person name="Kolonay J.F."/>
            <person name="Madupu R."/>
            <person name="Daugherty S.C."/>
            <person name="Brinkac L.M."/>
            <person name="Beanan M.J."/>
            <person name="Haft D.H."/>
            <person name="Nelson W.C."/>
            <person name="Davidsen T.M."/>
            <person name="Zafar N."/>
            <person name="Zhou L."/>
            <person name="Liu J."/>
            <person name="Yuan Q."/>
            <person name="Khouri H.M."/>
            <person name="Fedorova N.B."/>
            <person name="Tran B."/>
            <person name="Russell D."/>
            <person name="Berry K.J."/>
            <person name="Utterback T.R."/>
            <person name="Van Aken S.E."/>
            <person name="Feldblyum T.V."/>
            <person name="D'Ascenzo M."/>
            <person name="Deng W.-L."/>
            <person name="Ramos A.R."/>
            <person name="Alfano J.R."/>
            <person name="Cartinhour S."/>
            <person name="Chatterjee A.K."/>
            <person name="Delaney T.P."/>
            <person name="Lazarowitz S.G."/>
            <person name="Martin G.B."/>
            <person name="Schneider D.J."/>
            <person name="Tang X."/>
            <person name="Bender C.L."/>
            <person name="White O."/>
            <person name="Fraser C.M."/>
            <person name="Collmer A."/>
        </authorList>
    </citation>
    <scope>NUCLEOTIDE SEQUENCE [LARGE SCALE GENOMIC DNA]</scope>
    <source>
        <strain>ATCC BAA-871 / DC3000</strain>
    </source>
</reference>
<feature type="chain" id="PRO_0000120648" description="NAD kinase">
    <location>
        <begin position="1"/>
        <end position="296"/>
    </location>
</feature>
<feature type="active site" description="Proton acceptor" evidence="1">
    <location>
        <position position="72"/>
    </location>
</feature>
<feature type="binding site" evidence="1">
    <location>
        <begin position="72"/>
        <end position="73"/>
    </location>
    <ligand>
        <name>NAD(+)</name>
        <dbReference type="ChEBI" id="CHEBI:57540"/>
    </ligand>
</feature>
<feature type="binding site" evidence="1">
    <location>
        <begin position="146"/>
        <end position="147"/>
    </location>
    <ligand>
        <name>NAD(+)</name>
        <dbReference type="ChEBI" id="CHEBI:57540"/>
    </ligand>
</feature>
<feature type="binding site" evidence="1">
    <location>
        <position position="157"/>
    </location>
    <ligand>
        <name>NAD(+)</name>
        <dbReference type="ChEBI" id="CHEBI:57540"/>
    </ligand>
</feature>
<feature type="binding site" evidence="1">
    <location>
        <position position="174"/>
    </location>
    <ligand>
        <name>NAD(+)</name>
        <dbReference type="ChEBI" id="CHEBI:57540"/>
    </ligand>
</feature>
<feature type="binding site" evidence="1">
    <location>
        <position position="176"/>
    </location>
    <ligand>
        <name>NAD(+)</name>
        <dbReference type="ChEBI" id="CHEBI:57540"/>
    </ligand>
</feature>
<feature type="binding site" evidence="1">
    <location>
        <begin position="187"/>
        <end position="192"/>
    </location>
    <ligand>
        <name>NAD(+)</name>
        <dbReference type="ChEBI" id="CHEBI:57540"/>
    </ligand>
</feature>
<feature type="binding site" evidence="1">
    <location>
        <position position="247"/>
    </location>
    <ligand>
        <name>NAD(+)</name>
        <dbReference type="ChEBI" id="CHEBI:57540"/>
    </ligand>
</feature>
<evidence type="ECO:0000255" key="1">
    <source>
        <dbReference type="HAMAP-Rule" id="MF_00361"/>
    </source>
</evidence>
<accession>Q87YK2</accession>
<proteinExistence type="inferred from homology"/>
<gene>
    <name evidence="1" type="primary">nadK</name>
    <name type="ordered locus">PSPTO_3793</name>
</gene>
<sequence length="296" mass="32255">MEQFRNIGIIGRLGSVQVLDTVRRLKRFLLDRHLHVILEETIAEVLPGHGLQTSSRKMLGEVCDMVIVVGGDGSLLGAARALARHNVPVLGINRGSLGFLTDIRPDELEVKCAEVLDGHYLVENRFLLQAEVRRHGEAIGQGDALNDVVLHPGKSTRMIEFEIYIDGQFVCSQKADGLIVATPTGSTAYALSAGGPIMHPKLDAIVIVPMYPHTLSGRPIVVDGNSELKIVVSKDMTIYPQVSCDGQNHFTCAPGDTITVSKKPQKLRLIHPLDHNYYEVCRTKLGWGSRLGGGGD</sequence>
<name>NADK_PSESM</name>